<feature type="chain" id="PRO_0000288438" description="Arginine and glutamate-rich protein 1">
    <location>
        <begin position="1"/>
        <end position="273"/>
    </location>
</feature>
<feature type="region of interest" description="Disordered" evidence="3">
    <location>
        <begin position="1"/>
        <end position="113"/>
    </location>
</feature>
<feature type="region of interest" description="Necessary and sufficient for RNA binding" evidence="6">
    <location>
        <begin position="1"/>
        <end position="74"/>
    </location>
</feature>
<feature type="region of interest" description="Necessary and sufficient for transcriptional regulation" evidence="6">
    <location>
        <begin position="75"/>
        <end position="273"/>
    </location>
</feature>
<feature type="region of interest" description="Disordered" evidence="3">
    <location>
        <begin position="238"/>
        <end position="273"/>
    </location>
</feature>
<feature type="coiled-coil region" evidence="2">
    <location>
        <begin position="93"/>
        <end position="253"/>
    </location>
</feature>
<feature type="short sequence motif" description="LXXLL motif 1; degenerate" evidence="11">
    <location>
        <begin position="172"/>
        <end position="176"/>
    </location>
</feature>
<feature type="short sequence motif" description="LXXLL motif 2, degenerate" evidence="11">
    <location>
        <begin position="201"/>
        <end position="205"/>
    </location>
</feature>
<feature type="compositionally biased region" description="Basic residues" evidence="3">
    <location>
        <begin position="1"/>
        <end position="29"/>
    </location>
</feature>
<feature type="compositionally biased region" description="Basic residues" evidence="3">
    <location>
        <begin position="37"/>
        <end position="58"/>
    </location>
</feature>
<feature type="compositionally biased region" description="Basic and acidic residues" evidence="3">
    <location>
        <begin position="66"/>
        <end position="84"/>
    </location>
</feature>
<feature type="compositionally biased region" description="Basic and acidic residues" evidence="3">
    <location>
        <begin position="93"/>
        <end position="113"/>
    </location>
</feature>
<feature type="compositionally biased region" description="Basic and acidic residues" evidence="3">
    <location>
        <begin position="238"/>
        <end position="253"/>
    </location>
</feature>
<feature type="modified residue" description="Phosphoserine" evidence="14">
    <location>
        <position position="58"/>
    </location>
</feature>
<feature type="modified residue" description="Phosphoserine" evidence="14 15">
    <location>
        <position position="60"/>
    </location>
</feature>
<feature type="modified residue" description="Phosphothreonine" evidence="15">
    <location>
        <position position="61"/>
    </location>
</feature>
<feature type="modified residue" description="Phosphoserine" evidence="16">
    <location>
        <position position="76"/>
    </location>
</feature>
<feature type="modified residue" description="Phosphoserine" evidence="13 14 15 16 17">
    <location>
        <position position="77"/>
    </location>
</feature>
<feature type="modified residue" description="Phosphoserine" evidence="16">
    <location>
        <position position="266"/>
    </location>
</feature>
<feature type="splice variant" id="VSP_053685" description="In isoform 3." evidence="8">
    <location>
        <begin position="16"/>
        <end position="90"/>
    </location>
</feature>
<feature type="splice variant" id="VSP_025674" description="In isoform 2 and isoform 3." evidence="8 9">
    <original>EEERAKREELERILEENNRKIAEAQAKLAEEQLRIVEEQRKIHEERMKLEQERQRQQKEEQKIILGKGKSRPKLSFSLKTQD</original>
    <variation>VTLGRLESRDSPWQNFQCWVLPPAQFRKRWNTDYLIPFSSKLNIAAKVNFLAYSEVLTDNLKVGSFYKTYSRILFDLMELAI</variation>
    <location>
        <begin position="192"/>
        <end position="273"/>
    </location>
</feature>
<feature type="mutagenesis site" description="Does not disrupt nuclear receptor coactivator activity; on its own or when associated with 201-AERAA-205." evidence="6">
    <original>LLEEL</original>
    <variation>AAEEA</variation>
    <location>
        <begin position="172"/>
        <end position="176"/>
    </location>
</feature>
<feature type="mutagenesis site" description="Does not disrupt nuclear receptor coactivator activity; on its own or when associated with 172-AAEEA-176." evidence="6">
    <original>LERIL</original>
    <variation>AERAA</variation>
    <location>
        <begin position="201"/>
        <end position="205"/>
    </location>
</feature>
<protein>
    <recommendedName>
        <fullName>Arginine and glutamate-rich protein 1</fullName>
    </recommendedName>
</protein>
<name>ARGL1_HUMAN</name>
<gene>
    <name type="primary">ARGLU1</name>
</gene>
<keyword id="KW-0025">Alternative splicing</keyword>
<keyword id="KW-0158">Chromosome</keyword>
<keyword id="KW-0175">Coiled coil</keyword>
<keyword id="KW-0507">mRNA processing</keyword>
<keyword id="KW-0508">mRNA splicing</keyword>
<keyword id="KW-0539">Nucleus</keyword>
<keyword id="KW-0597">Phosphoprotein</keyword>
<keyword id="KW-1267">Proteomics identification</keyword>
<keyword id="KW-1185">Reference proteome</keyword>
<keyword id="KW-0677">Repeat</keyword>
<keyword id="KW-0694">RNA-binding</keyword>
<keyword id="KW-0804">Transcription</keyword>
<keyword id="KW-0805">Transcription regulation</keyword>
<accession>Q9NWB6</accession>
<accession>B4E0Y3</accession>
<accession>Q5T257</accession>
<accession>Q6IQ34</accession>
<sequence length="273" mass="33216">MGRSRSRSSSRSKHTKSSKHNKKRSRSRSRSRDKERVRKRSKSRESKRNRRRESRSRSRSTNTAVSRRERDRERASSPPDRIDIFGRTVSKRSSLDEKQKREEEEKKAEFERQRKIRQQEIEEKLIEEETARRVEELVAKRVEEELEKRKDEIEREVLRRVEEAKRIMEKQLLEELERQRQAELAAQKAREEEERAKREELERILEENNRKIAEAQAKLAEEQLRIVEEQRKIHEERMKLEQERQRQQKEEQKIILGKGKSRPKLSFSLKTQD</sequence>
<reference key="1">
    <citation type="journal article" date="2004" name="Nat. Genet.">
        <title>Complete sequencing and characterization of 21,243 full-length human cDNAs.</title>
        <authorList>
            <person name="Ota T."/>
            <person name="Suzuki Y."/>
            <person name="Nishikawa T."/>
            <person name="Otsuki T."/>
            <person name="Sugiyama T."/>
            <person name="Irie R."/>
            <person name="Wakamatsu A."/>
            <person name="Hayashi K."/>
            <person name="Sato H."/>
            <person name="Nagai K."/>
            <person name="Kimura K."/>
            <person name="Makita H."/>
            <person name="Sekine M."/>
            <person name="Obayashi M."/>
            <person name="Nishi T."/>
            <person name="Shibahara T."/>
            <person name="Tanaka T."/>
            <person name="Ishii S."/>
            <person name="Yamamoto J."/>
            <person name="Saito K."/>
            <person name="Kawai Y."/>
            <person name="Isono Y."/>
            <person name="Nakamura Y."/>
            <person name="Nagahari K."/>
            <person name="Murakami K."/>
            <person name="Yasuda T."/>
            <person name="Iwayanagi T."/>
            <person name="Wagatsuma M."/>
            <person name="Shiratori A."/>
            <person name="Sudo H."/>
            <person name="Hosoiri T."/>
            <person name="Kaku Y."/>
            <person name="Kodaira H."/>
            <person name="Kondo H."/>
            <person name="Sugawara M."/>
            <person name="Takahashi M."/>
            <person name="Kanda K."/>
            <person name="Yokoi T."/>
            <person name="Furuya T."/>
            <person name="Kikkawa E."/>
            <person name="Omura Y."/>
            <person name="Abe K."/>
            <person name="Kamihara K."/>
            <person name="Katsuta N."/>
            <person name="Sato K."/>
            <person name="Tanikawa M."/>
            <person name="Yamazaki M."/>
            <person name="Ninomiya K."/>
            <person name="Ishibashi T."/>
            <person name="Yamashita H."/>
            <person name="Murakawa K."/>
            <person name="Fujimori K."/>
            <person name="Tanai H."/>
            <person name="Kimata M."/>
            <person name="Watanabe M."/>
            <person name="Hiraoka S."/>
            <person name="Chiba Y."/>
            <person name="Ishida S."/>
            <person name="Ono Y."/>
            <person name="Takiguchi S."/>
            <person name="Watanabe S."/>
            <person name="Yosida M."/>
            <person name="Hotuta T."/>
            <person name="Kusano J."/>
            <person name="Kanehori K."/>
            <person name="Takahashi-Fujii A."/>
            <person name="Hara H."/>
            <person name="Tanase T.-O."/>
            <person name="Nomura Y."/>
            <person name="Togiya S."/>
            <person name="Komai F."/>
            <person name="Hara R."/>
            <person name="Takeuchi K."/>
            <person name="Arita M."/>
            <person name="Imose N."/>
            <person name="Musashino K."/>
            <person name="Yuuki H."/>
            <person name="Oshima A."/>
            <person name="Sasaki N."/>
            <person name="Aotsuka S."/>
            <person name="Yoshikawa Y."/>
            <person name="Matsunawa H."/>
            <person name="Ichihara T."/>
            <person name="Shiohata N."/>
            <person name="Sano S."/>
            <person name="Moriya S."/>
            <person name="Momiyama H."/>
            <person name="Satoh N."/>
            <person name="Takami S."/>
            <person name="Terashima Y."/>
            <person name="Suzuki O."/>
            <person name="Nakagawa S."/>
            <person name="Senoh A."/>
            <person name="Mizoguchi H."/>
            <person name="Goto Y."/>
            <person name="Shimizu F."/>
            <person name="Wakebe H."/>
            <person name="Hishigaki H."/>
            <person name="Watanabe T."/>
            <person name="Sugiyama A."/>
            <person name="Takemoto M."/>
            <person name="Kawakami B."/>
            <person name="Yamazaki M."/>
            <person name="Watanabe K."/>
            <person name="Kumagai A."/>
            <person name="Itakura S."/>
            <person name="Fukuzumi Y."/>
            <person name="Fujimori Y."/>
            <person name="Komiyama M."/>
            <person name="Tashiro H."/>
            <person name="Tanigami A."/>
            <person name="Fujiwara T."/>
            <person name="Ono T."/>
            <person name="Yamada K."/>
            <person name="Fujii Y."/>
            <person name="Ozaki K."/>
            <person name="Hirao M."/>
            <person name="Ohmori Y."/>
            <person name="Kawabata A."/>
            <person name="Hikiji T."/>
            <person name="Kobatake N."/>
            <person name="Inagaki H."/>
            <person name="Ikema Y."/>
            <person name="Okamoto S."/>
            <person name="Okitani R."/>
            <person name="Kawakami T."/>
            <person name="Noguchi S."/>
            <person name="Itoh T."/>
            <person name="Shigeta K."/>
            <person name="Senba T."/>
            <person name="Matsumura K."/>
            <person name="Nakajima Y."/>
            <person name="Mizuno T."/>
            <person name="Morinaga M."/>
            <person name="Sasaki M."/>
            <person name="Togashi T."/>
            <person name="Oyama M."/>
            <person name="Hata H."/>
            <person name="Watanabe M."/>
            <person name="Komatsu T."/>
            <person name="Mizushima-Sugano J."/>
            <person name="Satoh T."/>
            <person name="Shirai Y."/>
            <person name="Takahashi Y."/>
            <person name="Nakagawa K."/>
            <person name="Okumura K."/>
            <person name="Nagase T."/>
            <person name="Nomura N."/>
            <person name="Kikuchi H."/>
            <person name="Masuho Y."/>
            <person name="Yamashita R."/>
            <person name="Nakai K."/>
            <person name="Yada T."/>
            <person name="Nakamura Y."/>
            <person name="Ohara O."/>
            <person name="Isogai T."/>
            <person name="Sugano S."/>
        </authorList>
    </citation>
    <scope>NUCLEOTIDE SEQUENCE [LARGE SCALE MRNA] (ISOFORMS 1 AND 3)</scope>
    <source>
        <tissue>Embryo</tissue>
        <tissue>Thymus</tissue>
    </source>
</reference>
<reference key="2">
    <citation type="journal article" date="2004" name="Nature">
        <title>The DNA sequence and analysis of human chromosome 13.</title>
        <authorList>
            <person name="Dunham A."/>
            <person name="Matthews L.H."/>
            <person name="Burton J."/>
            <person name="Ashurst J.L."/>
            <person name="Howe K.L."/>
            <person name="Ashcroft K.J."/>
            <person name="Beare D.M."/>
            <person name="Burford D.C."/>
            <person name="Hunt S.E."/>
            <person name="Griffiths-Jones S."/>
            <person name="Jones M.C."/>
            <person name="Keenan S.J."/>
            <person name="Oliver K."/>
            <person name="Scott C.E."/>
            <person name="Ainscough R."/>
            <person name="Almeida J.P."/>
            <person name="Ambrose K.D."/>
            <person name="Andrews D.T."/>
            <person name="Ashwell R.I.S."/>
            <person name="Babbage A.K."/>
            <person name="Bagguley C.L."/>
            <person name="Bailey J."/>
            <person name="Bannerjee R."/>
            <person name="Barlow K.F."/>
            <person name="Bates K."/>
            <person name="Beasley H."/>
            <person name="Bird C.P."/>
            <person name="Bray-Allen S."/>
            <person name="Brown A.J."/>
            <person name="Brown J.Y."/>
            <person name="Burrill W."/>
            <person name="Carder C."/>
            <person name="Carter N.P."/>
            <person name="Chapman J.C."/>
            <person name="Clamp M.E."/>
            <person name="Clark S.Y."/>
            <person name="Clarke G."/>
            <person name="Clee C.M."/>
            <person name="Clegg S.C."/>
            <person name="Cobley V."/>
            <person name="Collins J.E."/>
            <person name="Corby N."/>
            <person name="Coville G.J."/>
            <person name="Deloukas P."/>
            <person name="Dhami P."/>
            <person name="Dunham I."/>
            <person name="Dunn M."/>
            <person name="Earthrowl M.E."/>
            <person name="Ellington A.G."/>
            <person name="Faulkner L."/>
            <person name="Frankish A.G."/>
            <person name="Frankland J."/>
            <person name="French L."/>
            <person name="Garner P."/>
            <person name="Garnett J."/>
            <person name="Gilbert J.G.R."/>
            <person name="Gilson C.J."/>
            <person name="Ghori J."/>
            <person name="Grafham D.V."/>
            <person name="Gribble S.M."/>
            <person name="Griffiths C."/>
            <person name="Hall R.E."/>
            <person name="Hammond S."/>
            <person name="Harley J.L."/>
            <person name="Hart E.A."/>
            <person name="Heath P.D."/>
            <person name="Howden P.J."/>
            <person name="Huckle E.J."/>
            <person name="Hunt P.J."/>
            <person name="Hunt A.R."/>
            <person name="Johnson C."/>
            <person name="Johnson D."/>
            <person name="Kay M."/>
            <person name="Kimberley A.M."/>
            <person name="King A."/>
            <person name="Laird G.K."/>
            <person name="Langford C.J."/>
            <person name="Lawlor S."/>
            <person name="Leongamornlert D.A."/>
            <person name="Lloyd D.M."/>
            <person name="Lloyd C."/>
            <person name="Loveland J.E."/>
            <person name="Lovell J."/>
            <person name="Martin S."/>
            <person name="Mashreghi-Mohammadi M."/>
            <person name="McLaren S.J."/>
            <person name="McMurray A."/>
            <person name="Milne S."/>
            <person name="Moore M.J.F."/>
            <person name="Nickerson T."/>
            <person name="Palmer S.A."/>
            <person name="Pearce A.V."/>
            <person name="Peck A.I."/>
            <person name="Pelan S."/>
            <person name="Phillimore B."/>
            <person name="Porter K.M."/>
            <person name="Rice C.M."/>
            <person name="Searle S."/>
            <person name="Sehra H.K."/>
            <person name="Shownkeen R."/>
            <person name="Skuce C.D."/>
            <person name="Smith M."/>
            <person name="Steward C.A."/>
            <person name="Sycamore N."/>
            <person name="Tester J."/>
            <person name="Thomas D.W."/>
            <person name="Tracey A."/>
            <person name="Tromans A."/>
            <person name="Tubby B."/>
            <person name="Wall M."/>
            <person name="Wallis J.M."/>
            <person name="West A.P."/>
            <person name="Whitehead S.L."/>
            <person name="Willey D.L."/>
            <person name="Wilming L."/>
            <person name="Wray P.W."/>
            <person name="Wright M.W."/>
            <person name="Young L."/>
            <person name="Coulson A."/>
            <person name="Durbin R.M."/>
            <person name="Hubbard T."/>
            <person name="Sulston J.E."/>
            <person name="Beck S."/>
            <person name="Bentley D.R."/>
            <person name="Rogers J."/>
            <person name="Ross M.T."/>
        </authorList>
    </citation>
    <scope>NUCLEOTIDE SEQUENCE [LARGE SCALE GENOMIC DNA]</scope>
</reference>
<reference key="3">
    <citation type="journal article" date="2004" name="Genome Res.">
        <title>The status, quality, and expansion of the NIH full-length cDNA project: the Mammalian Gene Collection (MGC).</title>
        <authorList>
            <consortium name="The MGC Project Team"/>
        </authorList>
    </citation>
    <scope>NUCLEOTIDE SEQUENCE [LARGE SCALE MRNA] (ISOFORMS 1 AND 2)</scope>
    <source>
        <tissue>Testis</tissue>
    </source>
</reference>
<reference key="4">
    <citation type="journal article" date="2006" name="Cell">
        <title>Global, in vivo, and site-specific phosphorylation dynamics in signaling networks.</title>
        <authorList>
            <person name="Olsen J.V."/>
            <person name="Blagoev B."/>
            <person name="Gnad F."/>
            <person name="Macek B."/>
            <person name="Kumar C."/>
            <person name="Mortensen P."/>
            <person name="Mann M."/>
        </authorList>
    </citation>
    <scope>IDENTIFICATION BY MASS SPECTROMETRY [LARGE SCALE ANALYSIS]</scope>
    <source>
        <tissue>Cervix carcinoma</tissue>
    </source>
</reference>
<reference key="5">
    <citation type="journal article" date="2008" name="Proc. Natl. Acad. Sci. U.S.A.">
        <title>A quantitative atlas of mitotic phosphorylation.</title>
        <authorList>
            <person name="Dephoure N."/>
            <person name="Zhou C."/>
            <person name="Villen J."/>
            <person name="Beausoleil S.A."/>
            <person name="Bakalarski C.E."/>
            <person name="Elledge S.J."/>
            <person name="Gygi S.P."/>
        </authorList>
    </citation>
    <scope>PHOSPHORYLATION [LARGE SCALE ANALYSIS] AT SER-77</scope>
    <scope>IDENTIFICATION BY MASS SPECTROMETRY [LARGE SCALE ANALYSIS]</scope>
    <source>
        <tissue>Cervix carcinoma</tissue>
    </source>
</reference>
<reference key="6">
    <citation type="journal article" date="2010" name="Sci. Signal.">
        <title>Quantitative phosphoproteomics reveals widespread full phosphorylation site occupancy during mitosis.</title>
        <authorList>
            <person name="Olsen J.V."/>
            <person name="Vermeulen M."/>
            <person name="Santamaria A."/>
            <person name="Kumar C."/>
            <person name="Miller M.L."/>
            <person name="Jensen L.J."/>
            <person name="Gnad F."/>
            <person name="Cox J."/>
            <person name="Jensen T.S."/>
            <person name="Nigg E.A."/>
            <person name="Brunak S."/>
            <person name="Mann M."/>
        </authorList>
    </citation>
    <scope>PHOSPHORYLATION [LARGE SCALE ANALYSIS] AT SER-58; SER-60 AND SER-77</scope>
    <scope>IDENTIFICATION BY MASS SPECTROMETRY [LARGE SCALE ANALYSIS]</scope>
    <source>
        <tissue>Cervix carcinoma</tissue>
    </source>
</reference>
<reference key="7">
    <citation type="journal article" date="2011" name="BMC Syst. Biol.">
        <title>Initial characterization of the human central proteome.</title>
        <authorList>
            <person name="Burkard T.R."/>
            <person name="Planyavsky M."/>
            <person name="Kaupe I."/>
            <person name="Breitwieser F.P."/>
            <person name="Buerckstuemmer T."/>
            <person name="Bennett K.L."/>
            <person name="Superti-Furga G."/>
            <person name="Colinge J."/>
        </authorList>
    </citation>
    <scope>IDENTIFICATION BY MASS SPECTROMETRY [LARGE SCALE ANALYSIS]</scope>
</reference>
<reference key="8">
    <citation type="journal article" date="2011" name="J. Biol. Chem.">
        <title>Arginine and glutamate-rich 1 (ARGLU1) interacts with mediator subunit 1 (MED1) and is required for estrogen receptor-mediated gene transcription and breast cancer cell growth.</title>
        <authorList>
            <person name="Zhang D."/>
            <person name="Jiang P."/>
            <person name="Xu Q."/>
            <person name="Zhang X."/>
        </authorList>
    </citation>
    <scope>FUNCTION</scope>
    <scope>INTERACTION WITH MED1</scope>
    <scope>SUBCELLULAR LOCATION</scope>
</reference>
<reference key="9">
    <citation type="journal article" date="2011" name="Sci. Signal.">
        <title>System-wide temporal characterization of the proteome and phosphoproteome of human embryonic stem cell differentiation.</title>
        <authorList>
            <person name="Rigbolt K.T."/>
            <person name="Prokhorova T.A."/>
            <person name="Akimov V."/>
            <person name="Henningsen J."/>
            <person name="Johansen P.T."/>
            <person name="Kratchmarova I."/>
            <person name="Kassem M."/>
            <person name="Mann M."/>
            <person name="Olsen J.V."/>
            <person name="Blagoev B."/>
        </authorList>
    </citation>
    <scope>PHOSPHORYLATION [LARGE SCALE ANALYSIS] AT SER-60; THR-61 AND SER-77</scope>
    <scope>IDENTIFICATION BY MASS SPECTROMETRY [LARGE SCALE ANALYSIS]</scope>
</reference>
<reference key="10">
    <citation type="journal article" date="2013" name="J. Proteome Res.">
        <title>Toward a comprehensive characterization of a human cancer cell phosphoproteome.</title>
        <authorList>
            <person name="Zhou H."/>
            <person name="Di Palma S."/>
            <person name="Preisinger C."/>
            <person name="Peng M."/>
            <person name="Polat A.N."/>
            <person name="Heck A.J."/>
            <person name="Mohammed S."/>
        </authorList>
    </citation>
    <scope>PHOSPHORYLATION [LARGE SCALE ANALYSIS] AT SER-76; SER-77 AND SER-266</scope>
    <scope>IDENTIFICATION BY MASS SPECTROMETRY [LARGE SCALE ANALYSIS]</scope>
    <source>
        <tissue>Cervix carcinoma</tissue>
        <tissue>Erythroleukemia</tissue>
    </source>
</reference>
<reference key="11">
    <citation type="journal article" date="2014" name="J. Proteomics">
        <title>An enzyme assisted RP-RPLC approach for in-depth analysis of human liver phosphoproteome.</title>
        <authorList>
            <person name="Bian Y."/>
            <person name="Song C."/>
            <person name="Cheng K."/>
            <person name="Dong M."/>
            <person name="Wang F."/>
            <person name="Huang J."/>
            <person name="Sun D."/>
            <person name="Wang L."/>
            <person name="Ye M."/>
            <person name="Zou H."/>
        </authorList>
    </citation>
    <scope>PHOSPHORYLATION [LARGE SCALE ANALYSIS] AT SER-77</scope>
    <scope>IDENTIFICATION BY MASS SPECTROMETRY [LARGE SCALE ANALYSIS]</scope>
    <source>
        <tissue>Liver</tissue>
    </source>
</reference>
<reference key="12">
    <citation type="journal article" date="2017" name="Nucleic Acids Res.">
        <title>An Ultraconserved Element (UCE) controls homeostatic splicing of ARGLU1 mRNA.</title>
        <authorList>
            <person name="Pirnie S.P."/>
            <person name="Osman A."/>
            <person name="Zhu Y."/>
            <person name="Carmichael G.G."/>
        </authorList>
    </citation>
    <scope>FUNCTION</scope>
    <scope>INDUCTION BY AUTOREGULATION</scope>
</reference>
<reference key="13">
    <citation type="journal article" date="2019" name="Nucleic Acids Res.">
        <title>ARGLU1 is a transcriptional coactivator and splicing regulator important for stress hormone signaling and development.</title>
        <authorList>
            <person name="Magomedova L."/>
            <person name="Tiefenbach J."/>
            <person name="Zilberman E."/>
            <person name="Le Billan F."/>
            <person name="Voisin V."/>
            <person name="Saikali M."/>
            <person name="Boivin V."/>
            <person name="Robitaille M."/>
            <person name="Gueroussov S."/>
            <person name="Irimia M."/>
            <person name="Ray D."/>
            <person name="Patel R."/>
            <person name="Xu C."/>
            <person name="Jeyasuria P."/>
            <person name="Bader G.D."/>
            <person name="Hughes T.R."/>
            <person name="Morris Q.D."/>
            <person name="Scott M.S."/>
            <person name="Krause H."/>
            <person name="Angers S."/>
            <person name="Blencowe B.J."/>
            <person name="Cummins C.L."/>
        </authorList>
    </citation>
    <scope>FUNCTION</scope>
    <scope>INTERACTION WITH PUF60; U2AF2 AND JMJD6</scope>
    <scope>SUBCELLULAR LOCATION</scope>
    <scope>DOMAINS LXXLL; ARG-RICH AND GLU-RICH</scope>
    <scope>MUTAGENESIS OF 172-LEU--LEU-176 AND 201-LEU--LEU-205</scope>
</reference>
<reference key="14">
    <citation type="journal article" date="2023" name="EMBO Rep.">
        <title>Distinct biogenesis pathways may have led to functional divergence of the human and Drosophila Arglu1 sisRNA.</title>
        <authorList>
            <person name="Chan S.N."/>
            <person name="Pek J.W."/>
        </authorList>
    </citation>
    <scope>FUNCTION</scope>
    <scope>SUBCELLULAR LOCATION</scope>
    <scope>INDUCTION BY AUTOREGULATION</scope>
</reference>
<comment type="function">
    <text evidence="1 4 5 6 7">Dual function regulator of gene expression; regulator of transcription and modulator of alternative splicing (PubMed:30698747). General coactivator of nuclear receptor-induced gene expression, including genes activated by the glucocorticoid receptor NR3C1 (PubMed:30698747). Binds to a subset of pre-mRNAs and to components of the spliceosome machinery to directly modulate basal alternative splicing; involved in simple and complex cassette exon splicing events (PubMed:30698747). Binds its own pre-mRNA and regulates its alternative splicing and degradation; one of the alternatively spliced products is a stable intronic sequence RNA (sisRNA) that binds the protein to regulate its ability to affect splicing (PubMed:27899669, PubMed:36533631). Binding of the sisRNA stimulates phase separation and localization to nuclear speckles, which may contribute to activation of nuclear receptor-induced gene expression (PubMed:36533631). May also indirectly modulate alternative splicing (PubMed:30698747). Regulates transcription of genes involved in heart development, neuronal cell function, protein localization and chromatin localization (By similarity). Regulates splicing of genes involved in neurogenesis and chromatin organization (By similarity). Essential for central nervous system development (By similarity). Required for the estrogen-dependent expression of ESR1 target genes (PubMed:21454576). Can act in cooperation with MED1 (PubMed:21454576).</text>
</comment>
<comment type="subunit">
    <text evidence="4 6">Interacts with MED1; the interaction is direct (PubMed:21454576). Interacts with PUF60, U2AF2 and JMJD6; may interact with other proteins involved in RNA processing and splicing (PubMed:30698747).</text>
</comment>
<comment type="interaction">
    <interactant intactId="EBI-2808785">
        <id>Q9NWB6</id>
    </interactant>
    <interactant intactId="EBI-8464037">
        <id>Q6NYC1</id>
        <label>JMJD6</label>
    </interactant>
    <organismsDiffer>false</organismsDiffer>
    <experiments>4</experiments>
</comment>
<comment type="interaction">
    <interactant intactId="EBI-2808785">
        <id>Q9NWB6</id>
    </interactant>
    <interactant intactId="EBI-1053259">
        <id>Q9UHX1</id>
        <label>PUF60</label>
    </interactant>
    <organismsDiffer>false</organismsDiffer>
    <experiments>4</experiments>
</comment>
<comment type="interaction">
    <interactant intactId="EBI-2808785">
        <id>Q9NWB6</id>
    </interactant>
    <interactant intactId="EBI-593303">
        <id>P78362</id>
        <label>SRPK2</label>
    </interactant>
    <organismsDiffer>false</organismsDiffer>
    <experiments>3</experiments>
</comment>
<comment type="interaction">
    <interactant intactId="EBI-2808785">
        <id>Q9NWB6</id>
    </interactant>
    <interactant intactId="EBI-742339">
        <id>P26368</id>
        <label>U2AF2</label>
    </interactant>
    <organismsDiffer>false</organismsDiffer>
    <experiments>4</experiments>
</comment>
<comment type="subcellular location">
    <subcellularLocation>
        <location evidence="4 6">Nucleus</location>
    </subcellularLocation>
    <subcellularLocation>
        <location evidence="6 7">Nucleus speckle</location>
    </subcellularLocation>
    <subcellularLocation>
        <location evidence="4">Chromosome</location>
    </subcellularLocation>
    <text evidence="1 4 7">Recruited, in an estrogen-dependent manner, to ESR1 target gene promoters (PubMed:21454576). Colocalizes with MED1 in nuclear speckles (PubMed:21454576, PubMed:36533631). Binding of sisRNA promotes phase separation and localization to nuclear speckles (PubMed:36533631). Associated with glucocorticoid response elements of target genes, even in the absence of glucocorticoid receptor ligands (By similarity).</text>
</comment>
<comment type="alternative products">
    <event type="alternative splicing"/>
    <isoform>
        <id>Q9NWB6-1</id>
        <name>1</name>
        <sequence type="displayed"/>
    </isoform>
    <isoform>
        <id>Q9NWB6-2</id>
        <name>2</name>
        <sequence type="described" ref="VSP_025674"/>
    </isoform>
    <isoform>
        <id>Q9NWB6-3</id>
        <name>3</name>
        <sequence type="described" ref="VSP_053685 VSP_025674"/>
    </isoform>
</comment>
<comment type="induction">
    <text evidence="5 7">Post-transcriptionally regulated by autoregulatory feedback loop (PubMed:27899669, PubMed:36533631). ARGLU1 protein binds ARGLU1 pre-mRNA and stimulates alternative splicing to produce two alternative RNA molecules (PubMed:27899669, PubMed:36533631). The first includes an additional exon between exons 2 and 3 and is rapidly degraded by nonsense mediated decay (PubMed:27899669, PubMed:36533631). The second, a stable intronic sequence RNA (sisRNA), retains the entirety of intron 2 and is able to bind ARGLU1 protein preventing it from stimulating alternative splicing (PubMed:27899669, PubMed:36533631).</text>
</comment>
<comment type="domain">
    <text evidence="6">The N-terminal region can bind RNA; preferentially binds 5'-CGG[AG]GG-3' motifs.</text>
</comment>
<comment type="domain">
    <text evidence="6">The non-classical LXXLL motifs are not required for nuclear receptor coactivator activity.</text>
</comment>
<comment type="domain">
    <text evidence="6">The C-terminal region is necessary and sufficient for regulation of transcription and nuclear receptor coactivator activity (PubMed:30698747). The C-terminal region is not required for RNA binding (PubMed:30698747).</text>
</comment>
<comment type="similarity">
    <text evidence="10">Belongs to the ARGLU1 family.</text>
</comment>
<organism evidence="12">
    <name type="scientific">Homo sapiens</name>
    <name type="common">Human</name>
    <dbReference type="NCBI Taxonomy" id="9606"/>
    <lineage>
        <taxon>Eukaryota</taxon>
        <taxon>Metazoa</taxon>
        <taxon>Chordata</taxon>
        <taxon>Craniata</taxon>
        <taxon>Vertebrata</taxon>
        <taxon>Euteleostomi</taxon>
        <taxon>Mammalia</taxon>
        <taxon>Eutheria</taxon>
        <taxon>Euarchontoglires</taxon>
        <taxon>Primates</taxon>
        <taxon>Haplorrhini</taxon>
        <taxon>Catarrhini</taxon>
        <taxon>Hominidae</taxon>
        <taxon>Homo</taxon>
    </lineage>
</organism>
<proteinExistence type="evidence at protein level"/>
<evidence type="ECO:0000250" key="1">
    <source>
        <dbReference type="UniProtKB" id="Q3UL36"/>
    </source>
</evidence>
<evidence type="ECO:0000255" key="2"/>
<evidence type="ECO:0000256" key="3">
    <source>
        <dbReference type="SAM" id="MobiDB-lite"/>
    </source>
</evidence>
<evidence type="ECO:0000269" key="4">
    <source>
    </source>
</evidence>
<evidence type="ECO:0000269" key="5">
    <source>
    </source>
</evidence>
<evidence type="ECO:0000269" key="6">
    <source>
    </source>
</evidence>
<evidence type="ECO:0000269" key="7">
    <source>
    </source>
</evidence>
<evidence type="ECO:0000303" key="8">
    <source>
    </source>
</evidence>
<evidence type="ECO:0000303" key="9">
    <source>
    </source>
</evidence>
<evidence type="ECO:0000305" key="10"/>
<evidence type="ECO:0000305" key="11">
    <source>
    </source>
</evidence>
<evidence type="ECO:0000312" key="12">
    <source>
        <dbReference type="Proteomes" id="UP000005640"/>
    </source>
</evidence>
<evidence type="ECO:0007744" key="13">
    <source>
    </source>
</evidence>
<evidence type="ECO:0007744" key="14">
    <source>
    </source>
</evidence>
<evidence type="ECO:0007744" key="15">
    <source>
    </source>
</evidence>
<evidence type="ECO:0007744" key="16">
    <source>
    </source>
</evidence>
<evidence type="ECO:0007744" key="17">
    <source>
    </source>
</evidence>
<dbReference type="EMBL" id="AK001016">
    <property type="protein sequence ID" value="BAA91467.1"/>
    <property type="molecule type" value="mRNA"/>
</dbReference>
<dbReference type="EMBL" id="AK303575">
    <property type="protein sequence ID" value="BAG64595.1"/>
    <property type="molecule type" value="mRNA"/>
</dbReference>
<dbReference type="EMBL" id="AL442127">
    <property type="status" value="NOT_ANNOTATED_CDS"/>
    <property type="molecule type" value="Genomic_DNA"/>
</dbReference>
<dbReference type="EMBL" id="BC050434">
    <property type="protein sequence ID" value="AAH50434.1"/>
    <property type="molecule type" value="mRNA"/>
</dbReference>
<dbReference type="EMBL" id="BC071587">
    <property type="protein sequence ID" value="AAH71587.1"/>
    <property type="molecule type" value="mRNA"/>
</dbReference>
<dbReference type="CCDS" id="CCDS41906.1">
    <molecule id="Q9NWB6-1"/>
</dbReference>
<dbReference type="RefSeq" id="NP_060481.3">
    <molecule id="Q9NWB6-1"/>
    <property type="nucleotide sequence ID" value="NM_018011.3"/>
</dbReference>
<dbReference type="SMR" id="Q9NWB6"/>
<dbReference type="BioGRID" id="120397">
    <property type="interactions" value="189"/>
</dbReference>
<dbReference type="FunCoup" id="Q9NWB6">
    <property type="interactions" value="3830"/>
</dbReference>
<dbReference type="IntAct" id="Q9NWB6">
    <property type="interactions" value="203"/>
</dbReference>
<dbReference type="MINT" id="Q9NWB6"/>
<dbReference type="STRING" id="9606.ENSP00000383059"/>
<dbReference type="GlyCosmos" id="Q9NWB6">
    <property type="glycosylation" value="1 site, 1 glycan"/>
</dbReference>
<dbReference type="GlyGen" id="Q9NWB6">
    <property type="glycosylation" value="1 site, 1 O-linked glycan (1 site)"/>
</dbReference>
<dbReference type="iPTMnet" id="Q9NWB6"/>
<dbReference type="PhosphoSitePlus" id="Q9NWB6"/>
<dbReference type="SwissPalm" id="Q9NWB6"/>
<dbReference type="BioMuta" id="ARGLU1"/>
<dbReference type="DMDM" id="74753014"/>
<dbReference type="jPOST" id="Q9NWB6"/>
<dbReference type="MassIVE" id="Q9NWB6"/>
<dbReference type="PaxDb" id="9606-ENSP00000383059"/>
<dbReference type="PeptideAtlas" id="Q9NWB6"/>
<dbReference type="ProteomicsDB" id="82923">
    <molecule id="Q9NWB6-1"/>
</dbReference>
<dbReference type="ProteomicsDB" id="82924">
    <molecule id="Q9NWB6-2"/>
</dbReference>
<dbReference type="Pumba" id="Q9NWB6"/>
<dbReference type="Antibodypedia" id="25410">
    <property type="antibodies" value="86 antibodies from 19 providers"/>
</dbReference>
<dbReference type="DNASU" id="55082"/>
<dbReference type="Ensembl" id="ENST00000400198.8">
    <molecule id="Q9NWB6-1"/>
    <property type="protein sequence ID" value="ENSP00000383059.3"/>
    <property type="gene ID" value="ENSG00000134884.15"/>
</dbReference>
<dbReference type="GeneID" id="55082"/>
<dbReference type="KEGG" id="hsa:55082"/>
<dbReference type="MANE-Select" id="ENST00000400198.8">
    <property type="protein sequence ID" value="ENSP00000383059.3"/>
    <property type="RefSeq nucleotide sequence ID" value="NM_018011.4"/>
    <property type="RefSeq protein sequence ID" value="NP_060481.3"/>
</dbReference>
<dbReference type="UCSC" id="uc001vqk.5">
    <molecule id="Q9NWB6-1"/>
    <property type="organism name" value="human"/>
</dbReference>
<dbReference type="AGR" id="HGNC:25482"/>
<dbReference type="CTD" id="55082"/>
<dbReference type="DisGeNET" id="55082"/>
<dbReference type="GeneCards" id="ARGLU1"/>
<dbReference type="HGNC" id="HGNC:25482">
    <property type="gene designation" value="ARGLU1"/>
</dbReference>
<dbReference type="HPA" id="ENSG00000134884">
    <property type="expression patterns" value="Low tissue specificity"/>
</dbReference>
<dbReference type="MIM" id="614046">
    <property type="type" value="gene"/>
</dbReference>
<dbReference type="neXtProt" id="NX_Q9NWB6"/>
<dbReference type="OpenTargets" id="ENSG00000134884"/>
<dbReference type="PharmGKB" id="PA162376869"/>
<dbReference type="VEuPathDB" id="HostDB:ENSG00000134884"/>
<dbReference type="eggNOG" id="ENOG502QPR5">
    <property type="taxonomic scope" value="Eukaryota"/>
</dbReference>
<dbReference type="GeneTree" id="ENSGT00730000111249"/>
<dbReference type="HOGENOM" id="CLU_076749_0_0_1"/>
<dbReference type="InParanoid" id="Q9NWB6"/>
<dbReference type="OMA" id="VNSHGRH"/>
<dbReference type="PAN-GO" id="Q9NWB6">
    <property type="GO annotations" value="2 GO annotations based on evolutionary models"/>
</dbReference>
<dbReference type="PhylomeDB" id="Q9NWB6"/>
<dbReference type="TreeFam" id="TF324123"/>
<dbReference type="PathwayCommons" id="Q9NWB6"/>
<dbReference type="SignaLink" id="Q9NWB6"/>
<dbReference type="BioGRID-ORCS" id="55082">
    <property type="hits" value="634 hits in 1176 CRISPR screens"/>
</dbReference>
<dbReference type="ChiTaRS" id="ARGLU1">
    <property type="organism name" value="human"/>
</dbReference>
<dbReference type="GeneWiki" id="ARGLU1"/>
<dbReference type="GenomeRNAi" id="55082"/>
<dbReference type="Pharos" id="Q9NWB6">
    <property type="development level" value="Tbio"/>
</dbReference>
<dbReference type="PRO" id="PR:Q9NWB6"/>
<dbReference type="Proteomes" id="UP000005640">
    <property type="component" value="Chromosome 13"/>
</dbReference>
<dbReference type="RNAct" id="Q9NWB6">
    <property type="molecule type" value="protein"/>
</dbReference>
<dbReference type="Bgee" id="ENSG00000134884">
    <property type="expression patterns" value="Expressed in sural nerve and 203 other cell types or tissues"/>
</dbReference>
<dbReference type="ExpressionAtlas" id="Q9NWB6">
    <property type="expression patterns" value="baseline and differential"/>
</dbReference>
<dbReference type="GO" id="GO:0005694">
    <property type="term" value="C:chromosome"/>
    <property type="evidence" value="ECO:0007669"/>
    <property type="project" value="UniProtKB-SubCell"/>
</dbReference>
<dbReference type="GO" id="GO:0005829">
    <property type="term" value="C:cytosol"/>
    <property type="evidence" value="ECO:0000314"/>
    <property type="project" value="HPA"/>
</dbReference>
<dbReference type="GO" id="GO:0005739">
    <property type="term" value="C:mitochondrion"/>
    <property type="evidence" value="ECO:0000314"/>
    <property type="project" value="HPA"/>
</dbReference>
<dbReference type="GO" id="GO:0016607">
    <property type="term" value="C:nuclear speck"/>
    <property type="evidence" value="ECO:0000314"/>
    <property type="project" value="UniProtKB"/>
</dbReference>
<dbReference type="GO" id="GO:0005654">
    <property type="term" value="C:nucleoplasm"/>
    <property type="evidence" value="ECO:0000314"/>
    <property type="project" value="HPA"/>
</dbReference>
<dbReference type="GO" id="GO:0045296">
    <property type="term" value="F:cadherin binding"/>
    <property type="evidence" value="ECO:0007005"/>
    <property type="project" value="BHF-UCL"/>
</dbReference>
<dbReference type="GO" id="GO:0036002">
    <property type="term" value="F:pre-mRNA binding"/>
    <property type="evidence" value="ECO:0000314"/>
    <property type="project" value="UniProtKB"/>
</dbReference>
<dbReference type="GO" id="GO:0003713">
    <property type="term" value="F:transcription coactivator activity"/>
    <property type="evidence" value="ECO:0000315"/>
    <property type="project" value="UniProtKB"/>
</dbReference>
<dbReference type="GO" id="GO:0006397">
    <property type="term" value="P:mRNA processing"/>
    <property type="evidence" value="ECO:0007669"/>
    <property type="project" value="UniProtKB-KW"/>
</dbReference>
<dbReference type="GO" id="GO:0000381">
    <property type="term" value="P:regulation of alternative mRNA splicing, via spliceosome"/>
    <property type="evidence" value="ECO:0000315"/>
    <property type="project" value="UniProtKB"/>
</dbReference>
<dbReference type="GO" id="GO:0008380">
    <property type="term" value="P:RNA splicing"/>
    <property type="evidence" value="ECO:0007669"/>
    <property type="project" value="UniProtKB-KW"/>
</dbReference>
<dbReference type="InterPro" id="IPR033371">
    <property type="entry name" value="ARGLU1"/>
</dbReference>
<dbReference type="PANTHER" id="PTHR31711">
    <property type="entry name" value="ARGININE AND GLUTAMATE-RICH PROTEIN 1"/>
    <property type="match status" value="1"/>
</dbReference>
<dbReference type="PANTHER" id="PTHR31711:SF1">
    <property type="entry name" value="ARGININE AND GLUTAMATE-RICH PROTEIN 1"/>
    <property type="match status" value="1"/>
</dbReference>
<dbReference type="Pfam" id="PF15346">
    <property type="entry name" value="ARGLU"/>
    <property type="match status" value="1"/>
</dbReference>